<dbReference type="EMBL" id="AF216957">
    <property type="protein sequence ID" value="AAF27632.1"/>
    <property type="status" value="ALT_FRAME"/>
    <property type="molecule type" value="Genomic_DNA"/>
</dbReference>
<dbReference type="EMBL" id="FN392320">
    <property type="protein sequence ID" value="CAY69288.1"/>
    <property type="molecule type" value="Genomic_DNA"/>
</dbReference>
<dbReference type="RefSeq" id="XP_002491568.1">
    <property type="nucleotide sequence ID" value="XM_002491523.1"/>
</dbReference>
<dbReference type="SMR" id="Q9P4D0"/>
<dbReference type="FunCoup" id="Q9P4D0">
    <property type="interactions" value="918"/>
</dbReference>
<dbReference type="STRING" id="644223.Q9P4D0"/>
<dbReference type="EnsemblFungi" id="CAY69288">
    <property type="protein sequence ID" value="CAY69288"/>
    <property type="gene ID" value="PAS_chr2-1_0644"/>
</dbReference>
<dbReference type="GeneID" id="8199258"/>
<dbReference type="KEGG" id="ppa:PAS_chr2-1_0644"/>
<dbReference type="eggNOG" id="KOG1586">
    <property type="taxonomic scope" value="Eukaryota"/>
</dbReference>
<dbReference type="HOGENOM" id="CLU_046329_0_2_1"/>
<dbReference type="InParanoid" id="Q9P4D0"/>
<dbReference type="OMA" id="WSVKEYL"/>
<dbReference type="OrthoDB" id="9984275at2759"/>
<dbReference type="Proteomes" id="UP000000314">
    <property type="component" value="Chromosome 2"/>
</dbReference>
<dbReference type="GO" id="GO:0005829">
    <property type="term" value="C:cytosol"/>
    <property type="evidence" value="ECO:0007669"/>
    <property type="project" value="EnsemblFungi"/>
</dbReference>
<dbReference type="GO" id="GO:0031201">
    <property type="term" value="C:SNARE complex"/>
    <property type="evidence" value="ECO:0007669"/>
    <property type="project" value="EnsemblFungi"/>
</dbReference>
<dbReference type="GO" id="GO:0005774">
    <property type="term" value="C:vacuolar membrane"/>
    <property type="evidence" value="ECO:0007669"/>
    <property type="project" value="TreeGrafter"/>
</dbReference>
<dbReference type="GO" id="GO:0001671">
    <property type="term" value="F:ATPase activator activity"/>
    <property type="evidence" value="ECO:0007669"/>
    <property type="project" value="EnsemblFungi"/>
</dbReference>
<dbReference type="GO" id="GO:0005483">
    <property type="term" value="F:soluble NSF attachment protein activity"/>
    <property type="evidence" value="ECO:0007669"/>
    <property type="project" value="EnsemblFungi"/>
</dbReference>
<dbReference type="GO" id="GO:0019905">
    <property type="term" value="F:syntaxin binding"/>
    <property type="evidence" value="ECO:0007669"/>
    <property type="project" value="TreeGrafter"/>
</dbReference>
<dbReference type="GO" id="GO:0006914">
    <property type="term" value="P:autophagy"/>
    <property type="evidence" value="ECO:0007669"/>
    <property type="project" value="EnsemblFungi"/>
</dbReference>
<dbReference type="GO" id="GO:0006886">
    <property type="term" value="P:intracellular protein transport"/>
    <property type="evidence" value="ECO:0007669"/>
    <property type="project" value="InterPro"/>
</dbReference>
<dbReference type="GO" id="GO:0035494">
    <property type="term" value="P:SNARE complex disassembly"/>
    <property type="evidence" value="ECO:0007669"/>
    <property type="project" value="EnsemblFungi"/>
</dbReference>
<dbReference type="GO" id="GO:0042144">
    <property type="term" value="P:vacuole fusion, non-autophagic"/>
    <property type="evidence" value="ECO:0007669"/>
    <property type="project" value="EnsemblFungi"/>
</dbReference>
<dbReference type="GO" id="GO:0048280">
    <property type="term" value="P:vesicle fusion with Golgi apparatus"/>
    <property type="evidence" value="ECO:0007669"/>
    <property type="project" value="EnsemblFungi"/>
</dbReference>
<dbReference type="CDD" id="cd15832">
    <property type="entry name" value="SNAP"/>
    <property type="match status" value="1"/>
</dbReference>
<dbReference type="FunFam" id="1.25.40.10:FF:000049">
    <property type="entry name" value="Alpha-soluble NSF attachment protein-like"/>
    <property type="match status" value="1"/>
</dbReference>
<dbReference type="Gene3D" id="1.25.40.10">
    <property type="entry name" value="Tetratricopeptide repeat domain"/>
    <property type="match status" value="1"/>
</dbReference>
<dbReference type="InterPro" id="IPR000744">
    <property type="entry name" value="NSF_attach"/>
</dbReference>
<dbReference type="InterPro" id="IPR011990">
    <property type="entry name" value="TPR-like_helical_dom_sf"/>
</dbReference>
<dbReference type="PANTHER" id="PTHR13768:SF8">
    <property type="entry name" value="ALPHA-SOLUBLE NSF ATTACHMENT PROTEIN"/>
    <property type="match status" value="1"/>
</dbReference>
<dbReference type="PANTHER" id="PTHR13768">
    <property type="entry name" value="SOLUBLE NSF ATTACHMENT PROTEIN SNAP"/>
    <property type="match status" value="1"/>
</dbReference>
<dbReference type="Pfam" id="PF14938">
    <property type="entry name" value="SNAP"/>
    <property type="match status" value="1"/>
</dbReference>
<dbReference type="PRINTS" id="PR00448">
    <property type="entry name" value="NSFATTACHMNT"/>
</dbReference>
<dbReference type="SUPFAM" id="SSF48452">
    <property type="entry name" value="TPR-like"/>
    <property type="match status" value="1"/>
</dbReference>
<reference key="1">
    <citation type="journal article" date="2000" name="Yeast">
        <title>Isolation of Pichia pastoris genes involved in ER-to-Golgi transport.</title>
        <authorList>
            <person name="Payne W.E."/>
            <person name="Kaiser C.A."/>
            <person name="Bevis B.J."/>
            <person name="Soderholm J."/>
            <person name="Fu D."/>
            <person name="Sears I.B."/>
            <person name="Glick B.S."/>
        </authorList>
    </citation>
    <scope>NUCLEOTIDE SEQUENCE [GENOMIC DNA]</scope>
</reference>
<reference key="2">
    <citation type="journal article" date="2009" name="Nat. Biotechnol.">
        <title>Genome sequence of the recombinant protein production host Pichia pastoris.</title>
        <authorList>
            <person name="De Schutter K."/>
            <person name="Lin Y.-C."/>
            <person name="Tiels P."/>
            <person name="Van Hecke A."/>
            <person name="Glinka S."/>
            <person name="Weber-Lehmann J."/>
            <person name="Rouze P."/>
            <person name="Van de Peer Y."/>
            <person name="Callewaert N."/>
        </authorList>
    </citation>
    <scope>NUCLEOTIDE SEQUENCE [LARGE SCALE GENOMIC DNA]</scope>
    <source>
        <strain>GS115 / ATCC 20864</strain>
    </source>
</reference>
<sequence length="297" mass="33321">MSEAEQLIAKADKKCAPVSGFASFFSGSGSYRFEEAADLYTQAANLYRIQRKSNKAGHVFEKAADAQIKADSKDEAANSLIEAYKCYKLDAPSDAARCLNKAVEFFALKGQFRRGANFKAELAELYETKMADPKHAILAYEEAGEWYRGDSAEALANKCYVKAADLSCSDEVQDFLKAAESYERIAKESLNNSLAKWSLKDYFFKAILCRLALNDYPSASALLERFVSWDPTFEKTREYEFALKLVDGLKEGDPDIIASASHEYDQISRLDNFKVKILNKIKNNIRDSDDLAEDDLT</sequence>
<keyword id="KW-0931">ER-Golgi transport</keyword>
<keyword id="KW-0472">Membrane</keyword>
<keyword id="KW-0653">Protein transport</keyword>
<keyword id="KW-1185">Reference proteome</keyword>
<keyword id="KW-0813">Transport</keyword>
<accession>Q9P4D0</accession>
<accession>C4R1B4</accession>
<comment type="function">
    <text evidence="1">Required for vesicular transport between the endoplasmic reticulum and the Golgi apparatus.</text>
</comment>
<comment type="subcellular location">
    <subcellularLocation>
        <location evidence="1">Membrane</location>
        <topology evidence="1">Peripheral membrane protein</topology>
    </subcellularLocation>
</comment>
<comment type="similarity">
    <text evidence="2">Belongs to the SNAP family.</text>
</comment>
<comment type="sequence caution" evidence="2">
    <conflict type="frameshift">
        <sequence resource="EMBL-CDS" id="AAF27632"/>
    </conflict>
</comment>
<protein>
    <recommendedName>
        <fullName>Vesicular-fusion protein SEC17</fullName>
    </recommendedName>
</protein>
<organism>
    <name type="scientific">Komagataella phaffii (strain GS115 / ATCC 20864)</name>
    <name type="common">Yeast</name>
    <name type="synonym">Pichia pastoris</name>
    <dbReference type="NCBI Taxonomy" id="644223"/>
    <lineage>
        <taxon>Eukaryota</taxon>
        <taxon>Fungi</taxon>
        <taxon>Dikarya</taxon>
        <taxon>Ascomycota</taxon>
        <taxon>Saccharomycotina</taxon>
        <taxon>Pichiomycetes</taxon>
        <taxon>Pichiales</taxon>
        <taxon>Pichiaceae</taxon>
        <taxon>Komagataella</taxon>
    </lineage>
</organism>
<proteinExistence type="inferred from homology"/>
<feature type="chain" id="PRO_0000219074" description="Vesicular-fusion protein SEC17">
    <location>
        <begin position="1"/>
        <end position="297"/>
    </location>
</feature>
<feature type="sequence conflict" description="In Ref. 1; AAF27632." evidence="2" ref="1">
    <original>F</original>
    <variation>L</variation>
    <location>
        <position position="106"/>
    </location>
</feature>
<feature type="sequence conflict" description="In Ref. 1; AAF27632." evidence="2" ref="1">
    <original>D</original>
    <variation>G</variation>
    <location>
        <position position="215"/>
    </location>
</feature>
<feature type="sequence conflict" description="In Ref. 1; AAF27632." evidence="2" ref="1">
    <original>E</original>
    <variation>G</variation>
    <location>
        <position position="238"/>
    </location>
</feature>
<feature type="sequence conflict" description="In Ref. 1; AAF27632." evidence="2" ref="1">
    <original>DDLT</original>
    <variation>MI</variation>
    <location>
        <begin position="294"/>
        <end position="297"/>
    </location>
</feature>
<name>SEC17_KOMPG</name>
<gene>
    <name type="primary">SEC17</name>
    <name type="ordered locus">PAS_chr2-1_0644</name>
</gene>
<evidence type="ECO:0000250" key="1"/>
<evidence type="ECO:0000305" key="2"/>